<proteinExistence type="inferred from homology"/>
<accession>B7KN34</accession>
<gene>
    <name evidence="1" type="primary">bioB</name>
    <name type="ordered locus">Mchl_4375</name>
</gene>
<protein>
    <recommendedName>
        <fullName evidence="1">Biotin synthase</fullName>
        <ecNumber evidence="1">2.8.1.6</ecNumber>
    </recommendedName>
</protein>
<evidence type="ECO:0000255" key="1">
    <source>
        <dbReference type="HAMAP-Rule" id="MF_01694"/>
    </source>
</evidence>
<evidence type="ECO:0000255" key="2">
    <source>
        <dbReference type="PROSITE-ProRule" id="PRU01266"/>
    </source>
</evidence>
<sequence length="335" mass="36063">MSDTVVSLTASPAAIRHDWTLAEIQAIHDMPLLDLVHRAGVVHRAHNDPADIQRAALLSIKTGGCPEDCAYCPQSAHHKGANLPRERLMPVDAVLKEAAAAKANGAHRFCMGAAWRKPKDGPDFDAVLEMVRGVRGLGMEACVTLGMLTQSQAQRLAEAGLTSYNHNLDTGPEFYGDIISTRTYDDRLQTLEHVRQAGIGVCCGGIVGMGERVRDRAEMLLVLANHAPHPESVPINALVAVEGTPLEDRPPIDPLDLVRMCATARIVMPKARVRLSAGRKSLTREAQILCFLAGANSIFYGERLLTTANNEADADAELLRDIGVPVPEVTLAAAE</sequence>
<keyword id="KW-0001">2Fe-2S</keyword>
<keyword id="KW-0004">4Fe-4S</keyword>
<keyword id="KW-0093">Biotin biosynthesis</keyword>
<keyword id="KW-0408">Iron</keyword>
<keyword id="KW-0411">Iron-sulfur</keyword>
<keyword id="KW-0479">Metal-binding</keyword>
<keyword id="KW-0949">S-adenosyl-L-methionine</keyword>
<keyword id="KW-0808">Transferase</keyword>
<organism>
    <name type="scientific">Methylorubrum extorquens (strain CM4 / NCIMB 13688)</name>
    <name type="common">Methylobacterium extorquens</name>
    <dbReference type="NCBI Taxonomy" id="440085"/>
    <lineage>
        <taxon>Bacteria</taxon>
        <taxon>Pseudomonadati</taxon>
        <taxon>Pseudomonadota</taxon>
        <taxon>Alphaproteobacteria</taxon>
        <taxon>Hyphomicrobiales</taxon>
        <taxon>Methylobacteriaceae</taxon>
        <taxon>Methylorubrum</taxon>
    </lineage>
</organism>
<comment type="function">
    <text evidence="1">Catalyzes the conversion of dethiobiotin (DTB) to biotin by the insertion of a sulfur atom into dethiobiotin via a radical-based mechanism.</text>
</comment>
<comment type="catalytic activity">
    <reaction evidence="1">
        <text>(4R,5S)-dethiobiotin + (sulfur carrier)-SH + 2 reduced [2Fe-2S]-[ferredoxin] + 2 S-adenosyl-L-methionine = (sulfur carrier)-H + biotin + 2 5'-deoxyadenosine + 2 L-methionine + 2 oxidized [2Fe-2S]-[ferredoxin]</text>
        <dbReference type="Rhea" id="RHEA:22060"/>
        <dbReference type="Rhea" id="RHEA-COMP:10000"/>
        <dbReference type="Rhea" id="RHEA-COMP:10001"/>
        <dbReference type="Rhea" id="RHEA-COMP:14737"/>
        <dbReference type="Rhea" id="RHEA-COMP:14739"/>
        <dbReference type="ChEBI" id="CHEBI:17319"/>
        <dbReference type="ChEBI" id="CHEBI:29917"/>
        <dbReference type="ChEBI" id="CHEBI:33737"/>
        <dbReference type="ChEBI" id="CHEBI:33738"/>
        <dbReference type="ChEBI" id="CHEBI:57586"/>
        <dbReference type="ChEBI" id="CHEBI:57844"/>
        <dbReference type="ChEBI" id="CHEBI:59789"/>
        <dbReference type="ChEBI" id="CHEBI:64428"/>
        <dbReference type="ChEBI" id="CHEBI:149473"/>
        <dbReference type="EC" id="2.8.1.6"/>
    </reaction>
</comment>
<comment type="cofactor">
    <cofactor evidence="1">
        <name>[4Fe-4S] cluster</name>
        <dbReference type="ChEBI" id="CHEBI:49883"/>
    </cofactor>
    <text evidence="1">Binds 1 [4Fe-4S] cluster. The cluster is coordinated with 3 cysteines and an exchangeable S-adenosyl-L-methionine.</text>
</comment>
<comment type="cofactor">
    <cofactor evidence="1">
        <name>[2Fe-2S] cluster</name>
        <dbReference type="ChEBI" id="CHEBI:190135"/>
    </cofactor>
    <text evidence="1">Binds 1 [2Fe-2S] cluster. The cluster is coordinated with 3 cysteines and 1 arginine.</text>
</comment>
<comment type="pathway">
    <text evidence="1">Cofactor biosynthesis; biotin biosynthesis; biotin from 7,8-diaminononanoate: step 2/2.</text>
</comment>
<comment type="subunit">
    <text evidence="1">Homodimer.</text>
</comment>
<comment type="similarity">
    <text evidence="1">Belongs to the radical SAM superfamily. Biotin synthase family.</text>
</comment>
<reference key="1">
    <citation type="submission" date="2008-12" db="EMBL/GenBank/DDBJ databases">
        <title>Complete sequence of chromosome of Methylobacterium chloromethanicum CM4.</title>
        <authorList>
            <consortium name="US DOE Joint Genome Institute"/>
            <person name="Lucas S."/>
            <person name="Copeland A."/>
            <person name="Lapidus A."/>
            <person name="Glavina del Rio T."/>
            <person name="Dalin E."/>
            <person name="Tice H."/>
            <person name="Bruce D."/>
            <person name="Goodwin L."/>
            <person name="Pitluck S."/>
            <person name="Chertkov O."/>
            <person name="Brettin T."/>
            <person name="Detter J.C."/>
            <person name="Han C."/>
            <person name="Larimer F."/>
            <person name="Land M."/>
            <person name="Hauser L."/>
            <person name="Kyrpides N."/>
            <person name="Mikhailova N."/>
            <person name="Marx C."/>
            <person name="Richardson P."/>
        </authorList>
    </citation>
    <scope>NUCLEOTIDE SEQUENCE [LARGE SCALE GENOMIC DNA]</scope>
    <source>
        <strain>CM4 / NCIMB 13688</strain>
    </source>
</reference>
<feature type="chain" id="PRO_0000381458" description="Biotin synthase">
    <location>
        <begin position="1"/>
        <end position="335"/>
    </location>
</feature>
<feature type="domain" description="Radical SAM core" evidence="2">
    <location>
        <begin position="50"/>
        <end position="279"/>
    </location>
</feature>
<feature type="binding site" evidence="1">
    <location>
        <position position="65"/>
    </location>
    <ligand>
        <name>[4Fe-4S] cluster</name>
        <dbReference type="ChEBI" id="CHEBI:49883"/>
        <note>4Fe-4S-S-AdoMet</note>
    </ligand>
</feature>
<feature type="binding site" evidence="1">
    <location>
        <position position="69"/>
    </location>
    <ligand>
        <name>[4Fe-4S] cluster</name>
        <dbReference type="ChEBI" id="CHEBI:49883"/>
        <note>4Fe-4S-S-AdoMet</note>
    </ligand>
</feature>
<feature type="binding site" evidence="1">
    <location>
        <position position="72"/>
    </location>
    <ligand>
        <name>[4Fe-4S] cluster</name>
        <dbReference type="ChEBI" id="CHEBI:49883"/>
        <note>4Fe-4S-S-AdoMet</note>
    </ligand>
</feature>
<feature type="binding site" evidence="1">
    <location>
        <position position="110"/>
    </location>
    <ligand>
        <name>[2Fe-2S] cluster</name>
        <dbReference type="ChEBI" id="CHEBI:190135"/>
    </ligand>
</feature>
<feature type="binding site" evidence="1">
    <location>
        <position position="142"/>
    </location>
    <ligand>
        <name>[2Fe-2S] cluster</name>
        <dbReference type="ChEBI" id="CHEBI:190135"/>
    </ligand>
</feature>
<feature type="binding site" evidence="1">
    <location>
        <position position="202"/>
    </location>
    <ligand>
        <name>[2Fe-2S] cluster</name>
        <dbReference type="ChEBI" id="CHEBI:190135"/>
    </ligand>
</feature>
<feature type="binding site" evidence="1">
    <location>
        <position position="274"/>
    </location>
    <ligand>
        <name>[2Fe-2S] cluster</name>
        <dbReference type="ChEBI" id="CHEBI:190135"/>
    </ligand>
</feature>
<name>BIOB_METC4</name>
<dbReference type="EC" id="2.8.1.6" evidence="1"/>
<dbReference type="EMBL" id="CP001298">
    <property type="protein sequence ID" value="ACK85151.1"/>
    <property type="molecule type" value="Genomic_DNA"/>
</dbReference>
<dbReference type="RefSeq" id="WP_003597522.1">
    <property type="nucleotide sequence ID" value="NC_011757.1"/>
</dbReference>
<dbReference type="SMR" id="B7KN34"/>
<dbReference type="GeneID" id="72991724"/>
<dbReference type="KEGG" id="mch:Mchl_4375"/>
<dbReference type="HOGENOM" id="CLU_033172_1_2_5"/>
<dbReference type="UniPathway" id="UPA00078">
    <property type="reaction ID" value="UER00162"/>
</dbReference>
<dbReference type="Proteomes" id="UP000002385">
    <property type="component" value="Chromosome"/>
</dbReference>
<dbReference type="GO" id="GO:0051537">
    <property type="term" value="F:2 iron, 2 sulfur cluster binding"/>
    <property type="evidence" value="ECO:0007669"/>
    <property type="project" value="UniProtKB-KW"/>
</dbReference>
<dbReference type="GO" id="GO:0051539">
    <property type="term" value="F:4 iron, 4 sulfur cluster binding"/>
    <property type="evidence" value="ECO:0007669"/>
    <property type="project" value="UniProtKB-KW"/>
</dbReference>
<dbReference type="GO" id="GO:0004076">
    <property type="term" value="F:biotin synthase activity"/>
    <property type="evidence" value="ECO:0007669"/>
    <property type="project" value="UniProtKB-UniRule"/>
</dbReference>
<dbReference type="GO" id="GO:0005506">
    <property type="term" value="F:iron ion binding"/>
    <property type="evidence" value="ECO:0007669"/>
    <property type="project" value="UniProtKB-UniRule"/>
</dbReference>
<dbReference type="GO" id="GO:0009102">
    <property type="term" value="P:biotin biosynthetic process"/>
    <property type="evidence" value="ECO:0007669"/>
    <property type="project" value="UniProtKB-UniRule"/>
</dbReference>
<dbReference type="CDD" id="cd01335">
    <property type="entry name" value="Radical_SAM"/>
    <property type="match status" value="1"/>
</dbReference>
<dbReference type="Gene3D" id="3.20.20.70">
    <property type="entry name" value="Aldolase class I"/>
    <property type="match status" value="1"/>
</dbReference>
<dbReference type="HAMAP" id="MF_01694">
    <property type="entry name" value="BioB"/>
    <property type="match status" value="1"/>
</dbReference>
<dbReference type="InterPro" id="IPR013785">
    <property type="entry name" value="Aldolase_TIM"/>
</dbReference>
<dbReference type="InterPro" id="IPR010722">
    <property type="entry name" value="BATS_dom"/>
</dbReference>
<dbReference type="InterPro" id="IPR002684">
    <property type="entry name" value="Biotin_synth/BioAB"/>
</dbReference>
<dbReference type="InterPro" id="IPR024177">
    <property type="entry name" value="Biotin_synthase"/>
</dbReference>
<dbReference type="InterPro" id="IPR006638">
    <property type="entry name" value="Elp3/MiaA/NifB-like_rSAM"/>
</dbReference>
<dbReference type="InterPro" id="IPR007197">
    <property type="entry name" value="rSAM"/>
</dbReference>
<dbReference type="NCBIfam" id="TIGR00433">
    <property type="entry name" value="bioB"/>
    <property type="match status" value="1"/>
</dbReference>
<dbReference type="PANTHER" id="PTHR22976">
    <property type="entry name" value="BIOTIN SYNTHASE"/>
    <property type="match status" value="1"/>
</dbReference>
<dbReference type="PANTHER" id="PTHR22976:SF2">
    <property type="entry name" value="BIOTIN SYNTHASE, MITOCHONDRIAL"/>
    <property type="match status" value="1"/>
</dbReference>
<dbReference type="Pfam" id="PF06968">
    <property type="entry name" value="BATS"/>
    <property type="match status" value="1"/>
</dbReference>
<dbReference type="Pfam" id="PF04055">
    <property type="entry name" value="Radical_SAM"/>
    <property type="match status" value="1"/>
</dbReference>
<dbReference type="PIRSF" id="PIRSF001619">
    <property type="entry name" value="Biotin_synth"/>
    <property type="match status" value="1"/>
</dbReference>
<dbReference type="SFLD" id="SFLDF00272">
    <property type="entry name" value="biotin_synthase"/>
    <property type="match status" value="1"/>
</dbReference>
<dbReference type="SFLD" id="SFLDS00029">
    <property type="entry name" value="Radical_SAM"/>
    <property type="match status" value="1"/>
</dbReference>
<dbReference type="SMART" id="SM00876">
    <property type="entry name" value="BATS"/>
    <property type="match status" value="1"/>
</dbReference>
<dbReference type="SMART" id="SM00729">
    <property type="entry name" value="Elp3"/>
    <property type="match status" value="1"/>
</dbReference>
<dbReference type="SUPFAM" id="SSF102114">
    <property type="entry name" value="Radical SAM enzymes"/>
    <property type="match status" value="1"/>
</dbReference>
<dbReference type="PROSITE" id="PS51918">
    <property type="entry name" value="RADICAL_SAM"/>
    <property type="match status" value="1"/>
</dbReference>